<name>SCRK_LACLC</name>
<dbReference type="EC" id="2.7.1.4"/>
<dbReference type="EMBL" id="Z97015">
    <property type="protein sequence ID" value="CAB09691.1"/>
    <property type="molecule type" value="Genomic_DNA"/>
</dbReference>
<dbReference type="SMR" id="P82371"/>
<dbReference type="GO" id="GO:0005524">
    <property type="term" value="F:ATP binding"/>
    <property type="evidence" value="ECO:0007669"/>
    <property type="project" value="UniProtKB-KW"/>
</dbReference>
<dbReference type="GO" id="GO:0008865">
    <property type="term" value="F:fructokinase activity"/>
    <property type="evidence" value="ECO:0007669"/>
    <property type="project" value="UniProtKB-EC"/>
</dbReference>
<dbReference type="GO" id="GO:0046872">
    <property type="term" value="F:metal ion binding"/>
    <property type="evidence" value="ECO:0007669"/>
    <property type="project" value="UniProtKB-KW"/>
</dbReference>
<dbReference type="CDD" id="cd24067">
    <property type="entry name" value="ASKHA_NBD_ROK_BsFRK-like"/>
    <property type="match status" value="1"/>
</dbReference>
<dbReference type="FunFam" id="3.30.420.40:FF:000136">
    <property type="entry name" value="Putative fructokinase"/>
    <property type="match status" value="1"/>
</dbReference>
<dbReference type="FunFam" id="3.30.420.40:FF:000153">
    <property type="entry name" value="Putative fructokinase"/>
    <property type="match status" value="1"/>
</dbReference>
<dbReference type="Gene3D" id="3.30.420.40">
    <property type="match status" value="2"/>
</dbReference>
<dbReference type="InterPro" id="IPR043129">
    <property type="entry name" value="ATPase_NBD"/>
</dbReference>
<dbReference type="InterPro" id="IPR051804">
    <property type="entry name" value="Carb_Metab_Reg_Kinase/Isom"/>
</dbReference>
<dbReference type="InterPro" id="IPR000600">
    <property type="entry name" value="ROK"/>
</dbReference>
<dbReference type="InterPro" id="IPR054618">
    <property type="entry name" value="ScrK"/>
</dbReference>
<dbReference type="NCBIfam" id="NF045550">
    <property type="entry name" value="FrctkaseScrK"/>
    <property type="match status" value="1"/>
</dbReference>
<dbReference type="PANTHER" id="PTHR42742:SF3">
    <property type="entry name" value="FRUCTOKINASE"/>
    <property type="match status" value="1"/>
</dbReference>
<dbReference type="PANTHER" id="PTHR42742">
    <property type="entry name" value="TRANSCRIPTIONAL REPRESSOR MPRA"/>
    <property type="match status" value="1"/>
</dbReference>
<dbReference type="Pfam" id="PF00480">
    <property type="entry name" value="ROK"/>
    <property type="match status" value="1"/>
</dbReference>
<dbReference type="SUPFAM" id="SSF53067">
    <property type="entry name" value="Actin-like ATPase domain"/>
    <property type="match status" value="1"/>
</dbReference>
<reference key="1">
    <citation type="journal article" date="1999" name="J. Bacteriol.">
        <title>Characterization of the divergent sacBK and sacAR operons, involved in sucrose utilization by Lactococcus lactis.</title>
        <authorList>
            <person name="Luesink E.J."/>
            <person name="Marugg J.D."/>
            <person name="Kuipers O.P."/>
            <person name="de Vos W.M."/>
        </authorList>
    </citation>
    <scope>NUCLEOTIDE SEQUENCE [GENOMIC DNA]</scope>
    <source>
        <strain>NZ9800</strain>
    </source>
</reference>
<gene>
    <name type="primary">scrK</name>
    <name type="synonym">sacK</name>
</gene>
<evidence type="ECO:0000250" key="1"/>
<evidence type="ECO:0000305" key="2"/>
<organism>
    <name type="scientific">Lactococcus lactis subsp. cremoris</name>
    <name type="common">Streptococcus cremoris</name>
    <dbReference type="NCBI Taxonomy" id="1359"/>
    <lineage>
        <taxon>Bacteria</taxon>
        <taxon>Bacillati</taxon>
        <taxon>Bacillota</taxon>
        <taxon>Bacilli</taxon>
        <taxon>Lactobacillales</taxon>
        <taxon>Streptococcaceae</taxon>
        <taxon>Lactococcus</taxon>
    </lineage>
</organism>
<proteinExistence type="inferred from homology"/>
<protein>
    <recommendedName>
        <fullName>Fructokinase</fullName>
        <ecNumber>2.7.1.4</ecNumber>
    </recommendedName>
</protein>
<sequence>MSVYYGSIEAGGTKFVLAIADEHFNIIKKFKFATTTPQETISKTIKYFKENRVSAIGLGSFGPIDLNLSSKTYGYITSTPKVGWKNINLVGQLKEALDIPIYFTTDVNASAYGEMKNTGIKNLVYLTIGTGIGGGAIQNGYFIGGIGHSEMGHQRINRHRDVLTFEGICPFHGDCLEGVAAGPSLEARTGILGEKISSDDPIWDILSYYIAQAAINATLTLAPECIILGGGVMEKPNMISLIQKQFISMLNNYIDLPCSVEKYIRLPTVKENGSATLGNFYLAYSLFTKE</sequence>
<accession>P82371</accession>
<comment type="catalytic activity">
    <reaction>
        <text>D-fructose + ATP = D-fructose 6-phosphate + ADP + H(+)</text>
        <dbReference type="Rhea" id="RHEA:16125"/>
        <dbReference type="ChEBI" id="CHEBI:15378"/>
        <dbReference type="ChEBI" id="CHEBI:30616"/>
        <dbReference type="ChEBI" id="CHEBI:37721"/>
        <dbReference type="ChEBI" id="CHEBI:61527"/>
        <dbReference type="ChEBI" id="CHEBI:456216"/>
        <dbReference type="EC" id="2.7.1.4"/>
    </reaction>
</comment>
<comment type="cofactor">
    <cofactor evidence="1">
        <name>Mg(2+)</name>
        <dbReference type="ChEBI" id="CHEBI:18420"/>
    </cofactor>
</comment>
<comment type="activity regulation">
    <text evidence="1 2">Inactivated by EDTA (By similarity). Inhibition by zinc ions (Potential).</text>
</comment>
<comment type="subunit">
    <text evidence="1">Homodimer.</text>
</comment>
<comment type="similarity">
    <text evidence="2">Belongs to the ROK (NagC/XylR) family.</text>
</comment>
<keyword id="KW-0067">ATP-binding</keyword>
<keyword id="KW-0119">Carbohydrate metabolism</keyword>
<keyword id="KW-0418">Kinase</keyword>
<keyword id="KW-0460">Magnesium</keyword>
<keyword id="KW-0479">Metal-binding</keyword>
<keyword id="KW-0547">Nucleotide-binding</keyword>
<keyword id="KW-0808">Transferase</keyword>
<keyword id="KW-0862">Zinc</keyword>
<feature type="initiator methionine" description="Removed" evidence="1">
    <location>
        <position position="1"/>
    </location>
</feature>
<feature type="chain" id="PRO_0000095683" description="Fructokinase">
    <location>
        <begin position="2"/>
        <end position="290"/>
    </location>
</feature>
<feature type="binding site" evidence="1">
    <location>
        <position position="130"/>
    </location>
    <ligand>
        <name>ATP</name>
        <dbReference type="ChEBI" id="CHEBI:30616"/>
    </ligand>
</feature>
<feature type="binding site" evidence="1">
    <location>
        <position position="153"/>
    </location>
    <ligand>
        <name>Zn(2+)</name>
        <dbReference type="ChEBI" id="CHEBI:29105"/>
    </ligand>
</feature>
<feature type="binding site" evidence="1">
    <location>
        <position position="169"/>
    </location>
    <ligand>
        <name>Zn(2+)</name>
        <dbReference type="ChEBI" id="CHEBI:29105"/>
    </ligand>
</feature>
<feature type="binding site" evidence="1">
    <location>
        <position position="172"/>
    </location>
    <ligand>
        <name>Zn(2+)</name>
        <dbReference type="ChEBI" id="CHEBI:29105"/>
    </ligand>
</feature>
<feature type="binding site" evidence="1">
    <location>
        <position position="175"/>
    </location>
    <ligand>
        <name>Zn(2+)</name>
        <dbReference type="ChEBI" id="CHEBI:29105"/>
    </ligand>
</feature>
<feature type="binding site" evidence="1">
    <location>
        <position position="183"/>
    </location>
    <ligand>
        <name>ATP</name>
        <dbReference type="ChEBI" id="CHEBI:30616"/>
    </ligand>
</feature>
<feature type="binding site" evidence="1">
    <location>
        <begin position="231"/>
        <end position="235"/>
    </location>
    <ligand>
        <name>ATP</name>
        <dbReference type="ChEBI" id="CHEBI:30616"/>
    </ligand>
</feature>